<keyword id="KW-0963">Cytoplasm</keyword>
<keyword id="KW-0539">Nucleus</keyword>
<keyword id="KW-0749">Sporulation</keyword>
<keyword id="KW-0804">Transcription</keyword>
<keyword id="KW-0805">Transcription regulation</keyword>
<gene>
    <name evidence="5" type="primary">velB</name>
    <name type="ORF">AFLA_081490</name>
</gene>
<accession>B8MYL0</accession>
<sequence>MYAIEERAHPPPPPPLSMDRIPPPSSSYPTPGSGGGMVSAGIPSSSHLAPLSTVHEGRIWSLQVVQQPIRARMCGFGDKDRRPITPPPCIRLIVKDAQTEKEIDINEIDTSFYVLMVDLWNAEGTNEVNLVKHSATSPSISTAMSSSYPPPPQTLSPTYAQYPQNAYGQPVPYPQMNSYYPGNPQLQYQNPYGASPQTSYYQPYYPTGGHMPQANISPAQPVSTGPGGMFTRNLIGSLSASAFRLTDPDNKIGVWFILQDLSVRTEGVFRLKMSFVNVGTQSSDSPNGGVSVINHGSAPVLASVFSEPFQVFSAKKFPGVIESTTLSKCFALQGIKIPIRKDGVKGSRGRNNDDDDGDDYD</sequence>
<protein>
    <recommendedName>
        <fullName evidence="6">Velvet complex subunit B</fullName>
    </recommendedName>
</protein>
<organism>
    <name type="scientific">Aspergillus flavus (strain ATCC 200026 / FGSC A1120 / IAM 13836 / NRRL 3357 / JCM 12722 / SRRC 167)</name>
    <dbReference type="NCBI Taxonomy" id="332952"/>
    <lineage>
        <taxon>Eukaryota</taxon>
        <taxon>Fungi</taxon>
        <taxon>Dikarya</taxon>
        <taxon>Ascomycota</taxon>
        <taxon>Pezizomycotina</taxon>
        <taxon>Eurotiomycetes</taxon>
        <taxon>Eurotiomycetidae</taxon>
        <taxon>Eurotiales</taxon>
        <taxon>Aspergillaceae</taxon>
        <taxon>Aspergillus</taxon>
        <taxon>Aspergillus subgen. Circumdati</taxon>
    </lineage>
</organism>
<evidence type="ECO:0000250" key="1">
    <source>
        <dbReference type="UniProtKB" id="C8VTS4"/>
    </source>
</evidence>
<evidence type="ECO:0000255" key="2">
    <source>
        <dbReference type="PROSITE-ProRule" id="PRU01165"/>
    </source>
</evidence>
<evidence type="ECO:0000256" key="3">
    <source>
        <dbReference type="SAM" id="MobiDB-lite"/>
    </source>
</evidence>
<evidence type="ECO:0000269" key="4">
    <source>
    </source>
</evidence>
<evidence type="ECO:0000303" key="5">
    <source>
    </source>
</evidence>
<evidence type="ECO:0000305" key="6"/>
<feature type="chain" id="PRO_0000435779" description="Velvet complex subunit B">
    <location>
        <begin position="1"/>
        <end position="361"/>
    </location>
</feature>
<feature type="domain" description="Velvet" evidence="2">
    <location>
        <begin position="54"/>
        <end position="340"/>
    </location>
</feature>
<feature type="region of interest" description="Disordered" evidence="3">
    <location>
        <begin position="1"/>
        <end position="44"/>
    </location>
</feature>
<feature type="region of interest" description="Disordered" evidence="3">
    <location>
        <begin position="139"/>
        <end position="161"/>
    </location>
</feature>
<feature type="compositionally biased region" description="Pro residues" evidence="3">
    <location>
        <begin position="10"/>
        <end position="26"/>
    </location>
</feature>
<name>VELB_ASPFN</name>
<comment type="function">
    <text evidence="1 4">Component of the velvet transcription factor complex that controls sexual/asexual developmental ratio in response to light, promoting sexual development in the darkness while stimulating asexual sporulation under illumination (PubMed:23994319). The velvet complex acts as a global regulator for secondary metabolite gene expression (By similarity). Component of the velB-VosA heterodimeric complex that plays a dual role in activating genes associated with spore maturation and repressing certain development-associated genes (By similarity). The velB-VosA complex binds DNA through the DNA-binding domain of vosA that recognizes an 11-nucleotide consensus sequence 5'-CTGGCCGCGGC-3' consisting of two motifs in the promoters of key developmental regulatory genes (By similarity). Controls the expression of the aflatoxin gene cluster (PubMed:23994319). Likely coordinates with fluG to modulate sclerotial production (PubMed:23994319).</text>
</comment>
<comment type="subunit">
    <text evidence="1 4">Component of the heterotrimeric velvet complex composed of laeA, veA and velB; VeA acting as a bridging protein between laeA and velB (PubMed:23994319). Forms a heterodimeric complex with vosA; the formation of the velB-vosA complex is light-dependent (By similarity).</text>
</comment>
<comment type="subcellular location">
    <subcellularLocation>
        <location evidence="1">Nucleus</location>
    </subcellularLocation>
    <subcellularLocation>
        <location evidence="1">Cytoplasm</location>
    </subcellularLocation>
    <text evidence="1">Nuclear localization is mediated by veA (By similarity).</text>
</comment>
<comment type="disruption phenotype">
    <text evidence="4">Impairs conidiation, and abolishes sclerotial formation and aflatoxin production (PubMed:23994319).</text>
</comment>
<comment type="similarity">
    <text evidence="6">Belongs to the velvet family. VelB subfamily.</text>
</comment>
<proteinExistence type="evidence at protein level"/>
<dbReference type="EMBL" id="EQ963472">
    <property type="protein sequence ID" value="EED57452.1"/>
    <property type="molecule type" value="Genomic_DNA"/>
</dbReference>
<dbReference type="RefSeq" id="XP_002373064.1">
    <property type="nucleotide sequence ID" value="XM_002373023.1"/>
</dbReference>
<dbReference type="SMR" id="B8MYL0"/>
<dbReference type="STRING" id="332952.B8MYL0"/>
<dbReference type="EnsemblFungi" id="EED57452">
    <property type="protein sequence ID" value="EED57452"/>
    <property type="gene ID" value="AFLA_081490"/>
</dbReference>
<dbReference type="VEuPathDB" id="FungiDB:AFLA_003716"/>
<dbReference type="eggNOG" id="ENOG502S1B4">
    <property type="taxonomic scope" value="Eukaryota"/>
</dbReference>
<dbReference type="HOGENOM" id="CLU_022491_0_0_1"/>
<dbReference type="OMA" id="YQDGRSW"/>
<dbReference type="GO" id="GO:0005737">
    <property type="term" value="C:cytoplasm"/>
    <property type="evidence" value="ECO:0007669"/>
    <property type="project" value="UniProtKB-SubCell"/>
</dbReference>
<dbReference type="GO" id="GO:0005634">
    <property type="term" value="C:nucleus"/>
    <property type="evidence" value="ECO:0007669"/>
    <property type="project" value="UniProtKB-SubCell"/>
</dbReference>
<dbReference type="GO" id="GO:0030435">
    <property type="term" value="P:sporulation resulting in formation of a cellular spore"/>
    <property type="evidence" value="ECO:0007669"/>
    <property type="project" value="UniProtKB-KW"/>
</dbReference>
<dbReference type="FunFam" id="2.60.40.3960:FF:000002">
    <property type="entry name" value="VeA-like protein"/>
    <property type="match status" value="1"/>
</dbReference>
<dbReference type="Gene3D" id="2.60.40.3960">
    <property type="entry name" value="Velvet domain"/>
    <property type="match status" value="2"/>
</dbReference>
<dbReference type="InterPro" id="IPR021740">
    <property type="entry name" value="Velvet"/>
</dbReference>
<dbReference type="InterPro" id="IPR037525">
    <property type="entry name" value="Velvet_dom"/>
</dbReference>
<dbReference type="InterPro" id="IPR038491">
    <property type="entry name" value="Velvet_dom_sf"/>
</dbReference>
<dbReference type="PANTHER" id="PTHR33572">
    <property type="entry name" value="SPORE DEVELOPMENT REGULATOR VOSA"/>
    <property type="match status" value="1"/>
</dbReference>
<dbReference type="PANTHER" id="PTHR33572:SF3">
    <property type="entry name" value="VELVET COMPLEX SUBUNIT B"/>
    <property type="match status" value="1"/>
</dbReference>
<dbReference type="Pfam" id="PF11754">
    <property type="entry name" value="Velvet"/>
    <property type="match status" value="1"/>
</dbReference>
<dbReference type="PROSITE" id="PS51821">
    <property type="entry name" value="VELVET"/>
    <property type="match status" value="1"/>
</dbReference>
<reference key="1">
    <citation type="journal article" date="2015" name="Genome Announc.">
        <title>Genome sequence of Aspergillus flavus NRRL 3357, a strain that causes aflatoxin contamination of food and feed.</title>
        <authorList>
            <person name="Nierman W.C."/>
            <person name="Yu J."/>
            <person name="Fedorova-Abrams N.D."/>
            <person name="Losada L."/>
            <person name="Cleveland T.E."/>
            <person name="Bhatnagar D."/>
            <person name="Bennett J.W."/>
            <person name="Dean R."/>
            <person name="Payne G.A."/>
        </authorList>
    </citation>
    <scope>NUCLEOTIDE SEQUENCE [LARGE SCALE GENOMIC DNA]</scope>
    <source>
        <strain>ATCC 200026 / FGSC A1120 / IAM 13836 / NRRL 3357 / JCM 12722 / SRRC 167</strain>
    </source>
</reference>
<reference key="2">
    <citation type="journal article" date="2013" name="Fungal Genet. Biol.">
        <title>Aspergillus flavus VelB acts distinctly from VeA in conidiation and may coordinate with FluG to modulate sclerotial production.</title>
        <authorList>
            <person name="Chang P.K."/>
            <person name="Scharfenstein L.L."/>
            <person name="Li P."/>
            <person name="Ehrlich K.C."/>
        </authorList>
    </citation>
    <scope>FUNCTION</scope>
    <scope>DISRUPTION PHENOTYPE</scope>
    <scope>IDENTIFICATION IN THE VELVET COMPLEX</scope>
</reference>